<reference key="1">
    <citation type="journal article" date="2002" name="DNA Res.">
        <title>Complete genomic sequence of nitrogen-fixing symbiotic bacterium Bradyrhizobium japonicum USDA110.</title>
        <authorList>
            <person name="Kaneko T."/>
            <person name="Nakamura Y."/>
            <person name="Sato S."/>
            <person name="Minamisawa K."/>
            <person name="Uchiumi T."/>
            <person name="Sasamoto S."/>
            <person name="Watanabe A."/>
            <person name="Idesawa K."/>
            <person name="Iriguchi M."/>
            <person name="Kawashima K."/>
            <person name="Kohara M."/>
            <person name="Matsumoto M."/>
            <person name="Shimpo S."/>
            <person name="Tsuruoka H."/>
            <person name="Wada T."/>
            <person name="Yamada M."/>
            <person name="Tabata S."/>
        </authorList>
    </citation>
    <scope>NUCLEOTIDE SEQUENCE [LARGE SCALE GENOMIC DNA]</scope>
    <source>
        <strain>JCM 10833 / BCRC 13528 / IAM 13628 / NBRC 14792 / USDA 110</strain>
    </source>
</reference>
<sequence length="213" mass="24181">MTDTTSMKHQTPLTSGDFTAADEPFALFETWLNEAIKSEPNDPNAMALATVDPDGLPDVRMVLMKGFDTEGFVFYSHIASQKGRELAANPKAALLFHWKSLRRQVRIRGNVTPVTDAEADAYFATRPKQAQIGAWASKQSEALESRFAFEQAIAKVAAKYIIGEVPRPPGWSGWRITPVRIEFWHDRPFRLHDRIEFRRDAAGQKWSKTRMYP</sequence>
<proteinExistence type="inferred from homology"/>
<evidence type="ECO:0000255" key="1">
    <source>
        <dbReference type="HAMAP-Rule" id="MF_01629"/>
    </source>
</evidence>
<name>PDXH_BRADU</name>
<gene>
    <name evidence="1" type="primary">pdxH</name>
    <name type="ordered locus">bll2624</name>
</gene>
<dbReference type="EC" id="1.4.3.5" evidence="1"/>
<dbReference type="EMBL" id="BA000040">
    <property type="protein sequence ID" value="BAC47889.1"/>
    <property type="molecule type" value="Genomic_DNA"/>
</dbReference>
<dbReference type="RefSeq" id="NP_769264.1">
    <property type="nucleotide sequence ID" value="NC_004463.1"/>
</dbReference>
<dbReference type="RefSeq" id="WP_011085410.1">
    <property type="nucleotide sequence ID" value="NC_004463.1"/>
</dbReference>
<dbReference type="SMR" id="Q89RY8"/>
<dbReference type="FunCoup" id="Q89RY8">
    <property type="interactions" value="598"/>
</dbReference>
<dbReference type="STRING" id="224911.AAV28_10115"/>
<dbReference type="EnsemblBacteria" id="BAC47889">
    <property type="protein sequence ID" value="BAC47889"/>
    <property type="gene ID" value="BAC47889"/>
</dbReference>
<dbReference type="GeneID" id="46489672"/>
<dbReference type="KEGG" id="bja:bll2624"/>
<dbReference type="PATRIC" id="fig|224911.44.peg.2224"/>
<dbReference type="eggNOG" id="COG0259">
    <property type="taxonomic scope" value="Bacteria"/>
</dbReference>
<dbReference type="HOGENOM" id="CLU_032263_2_3_5"/>
<dbReference type="InParanoid" id="Q89RY8"/>
<dbReference type="OrthoDB" id="9780392at2"/>
<dbReference type="PhylomeDB" id="Q89RY8"/>
<dbReference type="UniPathway" id="UPA01068">
    <property type="reaction ID" value="UER00304"/>
</dbReference>
<dbReference type="UniPathway" id="UPA01068">
    <property type="reaction ID" value="UER00305"/>
</dbReference>
<dbReference type="Proteomes" id="UP000002526">
    <property type="component" value="Chromosome"/>
</dbReference>
<dbReference type="GO" id="GO:0010181">
    <property type="term" value="F:FMN binding"/>
    <property type="evidence" value="ECO:0007669"/>
    <property type="project" value="UniProtKB-UniRule"/>
</dbReference>
<dbReference type="GO" id="GO:0004733">
    <property type="term" value="F:pyridoxamine phosphate oxidase activity"/>
    <property type="evidence" value="ECO:0000318"/>
    <property type="project" value="GO_Central"/>
</dbReference>
<dbReference type="GO" id="GO:0042823">
    <property type="term" value="P:pyridoxal phosphate biosynthetic process"/>
    <property type="evidence" value="ECO:0000318"/>
    <property type="project" value="GO_Central"/>
</dbReference>
<dbReference type="GO" id="GO:0008615">
    <property type="term" value="P:pyridoxine biosynthetic process"/>
    <property type="evidence" value="ECO:0007669"/>
    <property type="project" value="UniProtKB-KW"/>
</dbReference>
<dbReference type="FunFam" id="2.30.110.10:FF:000012">
    <property type="entry name" value="Predicted protein"/>
    <property type="match status" value="1"/>
</dbReference>
<dbReference type="Gene3D" id="2.30.110.10">
    <property type="entry name" value="Electron Transport, Fmn-binding Protein, Chain A"/>
    <property type="match status" value="1"/>
</dbReference>
<dbReference type="HAMAP" id="MF_01629">
    <property type="entry name" value="PdxH"/>
    <property type="match status" value="1"/>
</dbReference>
<dbReference type="InterPro" id="IPR000659">
    <property type="entry name" value="Pyridox_Oxase"/>
</dbReference>
<dbReference type="InterPro" id="IPR019740">
    <property type="entry name" value="Pyridox_Oxase_CS"/>
</dbReference>
<dbReference type="InterPro" id="IPR011576">
    <property type="entry name" value="Pyridox_Oxase_N"/>
</dbReference>
<dbReference type="InterPro" id="IPR019576">
    <property type="entry name" value="Pyridoxamine_oxidase_dimer_C"/>
</dbReference>
<dbReference type="InterPro" id="IPR012349">
    <property type="entry name" value="Split_barrel_FMN-bd"/>
</dbReference>
<dbReference type="NCBIfam" id="TIGR00558">
    <property type="entry name" value="pdxH"/>
    <property type="match status" value="1"/>
</dbReference>
<dbReference type="NCBIfam" id="NF004231">
    <property type="entry name" value="PRK05679.1"/>
    <property type="match status" value="1"/>
</dbReference>
<dbReference type="PANTHER" id="PTHR10851:SF0">
    <property type="entry name" value="PYRIDOXINE-5'-PHOSPHATE OXIDASE"/>
    <property type="match status" value="1"/>
</dbReference>
<dbReference type="PANTHER" id="PTHR10851">
    <property type="entry name" value="PYRIDOXINE-5-PHOSPHATE OXIDASE"/>
    <property type="match status" value="1"/>
</dbReference>
<dbReference type="Pfam" id="PF10590">
    <property type="entry name" value="PNP_phzG_C"/>
    <property type="match status" value="1"/>
</dbReference>
<dbReference type="Pfam" id="PF01243">
    <property type="entry name" value="PNPOx_N"/>
    <property type="match status" value="1"/>
</dbReference>
<dbReference type="PIRSF" id="PIRSF000190">
    <property type="entry name" value="Pyd_amn-ph_oxd"/>
    <property type="match status" value="1"/>
</dbReference>
<dbReference type="SUPFAM" id="SSF50475">
    <property type="entry name" value="FMN-binding split barrel"/>
    <property type="match status" value="1"/>
</dbReference>
<dbReference type="PROSITE" id="PS01064">
    <property type="entry name" value="PYRIDOX_OXIDASE"/>
    <property type="match status" value="1"/>
</dbReference>
<feature type="chain" id="PRO_0000167692" description="Pyridoxine/pyridoxamine 5'-phosphate oxidase">
    <location>
        <begin position="1"/>
        <end position="213"/>
    </location>
</feature>
<feature type="binding site" evidence="1">
    <location>
        <begin position="60"/>
        <end position="65"/>
    </location>
    <ligand>
        <name>FMN</name>
        <dbReference type="ChEBI" id="CHEBI:58210"/>
    </ligand>
</feature>
<feature type="binding site" evidence="1">
    <location>
        <position position="65"/>
    </location>
    <ligand>
        <name>substrate</name>
    </ligand>
</feature>
<feature type="binding site" evidence="1">
    <location>
        <begin position="75"/>
        <end position="76"/>
    </location>
    <ligand>
        <name>FMN</name>
        <dbReference type="ChEBI" id="CHEBI:58210"/>
    </ligand>
</feature>
<feature type="binding site" evidence="1">
    <location>
        <position position="82"/>
    </location>
    <ligand>
        <name>FMN</name>
        <dbReference type="ChEBI" id="CHEBI:58210"/>
    </ligand>
</feature>
<feature type="binding site" evidence="1">
    <location>
        <position position="104"/>
    </location>
    <ligand>
        <name>FMN</name>
        <dbReference type="ChEBI" id="CHEBI:58210"/>
    </ligand>
</feature>
<feature type="binding site" evidence="1">
    <location>
        <position position="122"/>
    </location>
    <ligand>
        <name>substrate</name>
    </ligand>
</feature>
<feature type="binding site" evidence="1">
    <location>
        <position position="126"/>
    </location>
    <ligand>
        <name>substrate</name>
    </ligand>
</feature>
<feature type="binding site" evidence="1">
    <location>
        <begin position="139"/>
        <end position="140"/>
    </location>
    <ligand>
        <name>FMN</name>
        <dbReference type="ChEBI" id="CHEBI:58210"/>
    </ligand>
</feature>
<feature type="binding site" evidence="1">
    <location>
        <position position="184"/>
    </location>
    <ligand>
        <name>FMN</name>
        <dbReference type="ChEBI" id="CHEBI:58210"/>
    </ligand>
</feature>
<feature type="binding site" evidence="1">
    <location>
        <begin position="190"/>
        <end position="192"/>
    </location>
    <ligand>
        <name>substrate</name>
    </ligand>
</feature>
<feature type="binding site" evidence="1">
    <location>
        <position position="194"/>
    </location>
    <ligand>
        <name>FMN</name>
        <dbReference type="ChEBI" id="CHEBI:58210"/>
    </ligand>
</feature>
<organism>
    <name type="scientific">Bradyrhizobium diazoefficiens (strain JCM 10833 / BCRC 13528 / IAM 13628 / NBRC 14792 / USDA 110)</name>
    <dbReference type="NCBI Taxonomy" id="224911"/>
    <lineage>
        <taxon>Bacteria</taxon>
        <taxon>Pseudomonadati</taxon>
        <taxon>Pseudomonadota</taxon>
        <taxon>Alphaproteobacteria</taxon>
        <taxon>Hyphomicrobiales</taxon>
        <taxon>Nitrobacteraceae</taxon>
        <taxon>Bradyrhizobium</taxon>
    </lineage>
</organism>
<keyword id="KW-0285">Flavoprotein</keyword>
<keyword id="KW-0288">FMN</keyword>
<keyword id="KW-0560">Oxidoreductase</keyword>
<keyword id="KW-0664">Pyridoxine biosynthesis</keyword>
<keyword id="KW-1185">Reference proteome</keyword>
<accession>Q89RY8</accession>
<comment type="function">
    <text evidence="1">Catalyzes the oxidation of either pyridoxine 5'-phosphate (PNP) or pyridoxamine 5'-phosphate (PMP) into pyridoxal 5'-phosphate (PLP).</text>
</comment>
<comment type="catalytic activity">
    <reaction evidence="1">
        <text>pyridoxamine 5'-phosphate + O2 + H2O = pyridoxal 5'-phosphate + H2O2 + NH4(+)</text>
        <dbReference type="Rhea" id="RHEA:15817"/>
        <dbReference type="ChEBI" id="CHEBI:15377"/>
        <dbReference type="ChEBI" id="CHEBI:15379"/>
        <dbReference type="ChEBI" id="CHEBI:16240"/>
        <dbReference type="ChEBI" id="CHEBI:28938"/>
        <dbReference type="ChEBI" id="CHEBI:58451"/>
        <dbReference type="ChEBI" id="CHEBI:597326"/>
        <dbReference type="EC" id="1.4.3.5"/>
    </reaction>
</comment>
<comment type="catalytic activity">
    <reaction evidence="1">
        <text>pyridoxine 5'-phosphate + O2 = pyridoxal 5'-phosphate + H2O2</text>
        <dbReference type="Rhea" id="RHEA:15149"/>
        <dbReference type="ChEBI" id="CHEBI:15379"/>
        <dbReference type="ChEBI" id="CHEBI:16240"/>
        <dbReference type="ChEBI" id="CHEBI:58589"/>
        <dbReference type="ChEBI" id="CHEBI:597326"/>
        <dbReference type="EC" id="1.4.3.5"/>
    </reaction>
</comment>
<comment type="cofactor">
    <cofactor evidence="1">
        <name>FMN</name>
        <dbReference type="ChEBI" id="CHEBI:58210"/>
    </cofactor>
    <text evidence="1">Binds 1 FMN per subunit.</text>
</comment>
<comment type="pathway">
    <text evidence="1">Cofactor metabolism; pyridoxal 5'-phosphate salvage; pyridoxal 5'-phosphate from pyridoxamine 5'-phosphate: step 1/1.</text>
</comment>
<comment type="pathway">
    <text evidence="1">Cofactor metabolism; pyridoxal 5'-phosphate salvage; pyridoxal 5'-phosphate from pyridoxine 5'-phosphate: step 1/1.</text>
</comment>
<comment type="subunit">
    <text evidence="1">Homodimer.</text>
</comment>
<comment type="similarity">
    <text evidence="1">Belongs to the pyridoxamine 5'-phosphate oxidase family.</text>
</comment>
<protein>
    <recommendedName>
        <fullName evidence="1">Pyridoxine/pyridoxamine 5'-phosphate oxidase</fullName>
        <ecNumber evidence="1">1.4.3.5</ecNumber>
    </recommendedName>
    <alternativeName>
        <fullName evidence="1">PNP/PMP oxidase</fullName>
        <shortName evidence="1">PNPOx</shortName>
    </alternativeName>
    <alternativeName>
        <fullName evidence="1">Pyridoxal 5'-phosphate synthase</fullName>
    </alternativeName>
</protein>